<gene>
    <name evidence="1 2" type="primary">sctC</name>
    <name evidence="5" type="synonym">hrpH</name>
</gene>
<name>SCTC_PSESY</name>
<keyword id="KW-0998">Cell outer membrane</keyword>
<keyword id="KW-0928">Hypersensitive response elicitation</keyword>
<keyword id="KW-0472">Membrane</keyword>
<keyword id="KW-0653">Protein transport</keyword>
<keyword id="KW-0732">Signal</keyword>
<keyword id="KW-0811">Translocation</keyword>
<keyword id="KW-0813">Transport</keyword>
<dbReference type="EMBL" id="L01064">
    <property type="protein sequence ID" value="AAC05014.1"/>
    <property type="molecule type" value="Genomic_DNA"/>
</dbReference>
<dbReference type="EMBL" id="EF514224">
    <property type="protein sequence ID" value="AAB05085.2"/>
    <property type="molecule type" value="Genomic_DNA"/>
</dbReference>
<dbReference type="PIR" id="A45243">
    <property type="entry name" value="A45243"/>
</dbReference>
<dbReference type="TCDB" id="1.B.22.3.1">
    <property type="family name" value="the outer bacterial membrane secretin (secretin) family"/>
</dbReference>
<dbReference type="GO" id="GO:0009279">
    <property type="term" value="C:cell outer membrane"/>
    <property type="evidence" value="ECO:0007669"/>
    <property type="project" value="UniProtKB-SubCell"/>
</dbReference>
<dbReference type="GO" id="GO:0015627">
    <property type="term" value="C:type II protein secretion system complex"/>
    <property type="evidence" value="ECO:0007669"/>
    <property type="project" value="TreeGrafter"/>
</dbReference>
<dbReference type="GO" id="GO:0030257">
    <property type="term" value="C:type III protein secretion system complex"/>
    <property type="evidence" value="ECO:0007669"/>
    <property type="project" value="UniProtKB-UniRule"/>
</dbReference>
<dbReference type="GO" id="GO:0030254">
    <property type="term" value="P:protein secretion by the type III secretion system"/>
    <property type="evidence" value="ECO:0007669"/>
    <property type="project" value="UniProtKB-UniRule"/>
</dbReference>
<dbReference type="GO" id="GO:0052040">
    <property type="term" value="P:symbiont-mediated perturbation of host programmed cell death"/>
    <property type="evidence" value="ECO:0007669"/>
    <property type="project" value="UniProtKB-KW"/>
</dbReference>
<dbReference type="Gene3D" id="3.30.1370.120">
    <property type="match status" value="2"/>
</dbReference>
<dbReference type="Gene3D" id="3.55.50.30">
    <property type="match status" value="1"/>
</dbReference>
<dbReference type="HAMAP" id="MF_02219">
    <property type="entry name" value="Type_III_secretin"/>
    <property type="match status" value="1"/>
</dbReference>
<dbReference type="InterPro" id="IPR050810">
    <property type="entry name" value="Bact_Secretion_Sys_Channel"/>
</dbReference>
<dbReference type="InterPro" id="IPR005644">
    <property type="entry name" value="NolW-like"/>
</dbReference>
<dbReference type="InterPro" id="IPR038591">
    <property type="entry name" value="NolW-like_sf"/>
</dbReference>
<dbReference type="InterPro" id="IPR004846">
    <property type="entry name" value="T2SS/T3SS_dom"/>
</dbReference>
<dbReference type="InterPro" id="IPR004845">
    <property type="entry name" value="T2SS_GspD_CS"/>
</dbReference>
<dbReference type="InterPro" id="IPR003522">
    <property type="entry name" value="T3SS_OM_pore_YscC"/>
</dbReference>
<dbReference type="NCBIfam" id="TIGR02516">
    <property type="entry name" value="type_III_yscC"/>
    <property type="match status" value="1"/>
</dbReference>
<dbReference type="PANTHER" id="PTHR30332">
    <property type="entry name" value="PROBABLE GENERAL SECRETION PATHWAY PROTEIN D"/>
    <property type="match status" value="1"/>
</dbReference>
<dbReference type="PANTHER" id="PTHR30332:SF5">
    <property type="entry name" value="SPI-1 TYPE 3 SECRETION SYSTEM SECRETIN"/>
    <property type="match status" value="1"/>
</dbReference>
<dbReference type="Pfam" id="PF00263">
    <property type="entry name" value="Secretin"/>
    <property type="match status" value="1"/>
</dbReference>
<dbReference type="Pfam" id="PF03958">
    <property type="entry name" value="Secretin_N"/>
    <property type="match status" value="2"/>
</dbReference>
<dbReference type="PRINTS" id="PR01337">
    <property type="entry name" value="TYPE3OMGPROT"/>
</dbReference>
<dbReference type="PROSITE" id="PS00875">
    <property type="entry name" value="T2SP_D"/>
    <property type="match status" value="1"/>
</dbReference>
<organism>
    <name type="scientific">Pseudomonas syringae pv. syringae</name>
    <dbReference type="NCBI Taxonomy" id="321"/>
    <lineage>
        <taxon>Bacteria</taxon>
        <taxon>Pseudomonadati</taxon>
        <taxon>Pseudomonadota</taxon>
        <taxon>Gammaproteobacteria</taxon>
        <taxon>Pseudomonadales</taxon>
        <taxon>Pseudomonadaceae</taxon>
        <taxon>Pseudomonas</taxon>
        <taxon>Pseudomonas syringae</taxon>
    </lineage>
</organism>
<protein>
    <recommendedName>
        <fullName evidence="1 2">Type 3 secretion system secretin</fullName>
        <shortName evidence="1 2">T3SS secretin</shortName>
    </recommendedName>
    <alternativeName>
        <fullName evidence="6">Hypersensitivity response secretion protein HrpH</fullName>
    </alternativeName>
</protein>
<evidence type="ECO:0000250" key="1">
    <source>
        <dbReference type="UniProtKB" id="Q01244"/>
    </source>
</evidence>
<evidence type="ECO:0000255" key="2">
    <source>
        <dbReference type="HAMAP-Rule" id="MF_02219"/>
    </source>
</evidence>
<evidence type="ECO:0000256" key="3">
    <source>
        <dbReference type="SAM" id="MobiDB-lite"/>
    </source>
</evidence>
<evidence type="ECO:0000269" key="4">
    <source>
    </source>
</evidence>
<evidence type="ECO:0000303" key="5">
    <source>
    </source>
</evidence>
<evidence type="ECO:0000305" key="6"/>
<evidence type="ECO:0000305" key="7">
    <source>
    </source>
</evidence>
<feature type="signal peptide" evidence="2">
    <location>
        <begin position="1"/>
        <end position="21"/>
    </location>
</feature>
<feature type="chain" id="PRO_0000013108" description="Type 3 secretion system secretin" evidence="2">
    <location>
        <begin position="22"/>
        <end position="701"/>
    </location>
</feature>
<feature type="region of interest" description="Disordered" evidence="3">
    <location>
        <begin position="229"/>
        <end position="252"/>
    </location>
</feature>
<feature type="compositionally biased region" description="Gly residues" evidence="3">
    <location>
        <begin position="229"/>
        <end position="238"/>
    </location>
</feature>
<feature type="compositionally biased region" description="Polar residues" evidence="3">
    <location>
        <begin position="240"/>
        <end position="252"/>
    </location>
</feature>
<sequence length="701" mass="76546">MRKALMWLPLLLIGLSPATWAVTPEAWKHTAYAYDARQTELATALADFAKEFGMALDMPPIPGVLDDRIRAQSPEEFLDRLGQEYHFQWFVYNDTLYVSPSSEHTSARIEVSSDAVDDLQTALTDVGLLDKRFGWGVLPNEGVVLVRGPAKYVELVRDYSKKVEAPEKGDKQDVIVFPLKYASAADRTIRYRDQQLVVAGVASILQDLLDTRSHGGSINGMDLLGRGGRGNGLAGGGSPDTPSLPMSSSGLDTNALEQGLDQVLHYGGGGTKSSGKSRSGGRANIRVTADVRNNAVLIYDLPSRKAMYEKLIKELDVSRNLIEIDAVILDIDRNELAELSSRWNFNAGSVNGGANMFDAGTSSTLFIQNAGKFAAELHALEGNGSASVIGNPSILTLENQPAVIDFSRTEYLTATSERVANIEPITAGTSLQVTPRSLDHDGKPQVQLIVDIEDGQIDISDINDTQPSVRKGNVSTQAVIAEHGSLVIGGFHGLEANDKVHKVPLLGDIPYIGKLLFQSRSRELSQRERLFILTPRLIGDQVNPARYVQNGNPHDVDDQMKRIKERRDGGELPTRGDIQKVFTQMVDGAAPEGMHDGETLPFETDSLCDPGQGLSLDGQRSQWYARKDWGVAVVVARNNTDKPVRIDESRCGGRWVIGVAAWPHAWLQPGEESEVYIAVRQPQISKMAKESRPSLLRGAKP</sequence>
<reference key="1">
    <citation type="journal article" date="1992" name="J. Bacteriol.">
        <title>The Pseudomonas syringae pv. syringae 61 hrpH product, an envelope protein required for elicitation of the hypersensitive response in plants.</title>
        <authorList>
            <person name="Huang H.-C."/>
            <person name="He S.Y."/>
            <person name="Bauer D.W."/>
            <person name="Collmer A."/>
        </authorList>
    </citation>
    <scope>NUCLEOTIDE SEQUENCE [GENOMIC DNA]</scope>
    <scope>FUNCTION</scope>
    <scope>SUBCELLULAR LOCATION</scope>
    <source>
        <strain>Pss61</strain>
    </source>
</reference>
<reference key="2">
    <citation type="submission" date="1998-03" db="EMBL/GenBank/DDBJ databases">
        <authorList>
            <person name="Deng W.-L."/>
        </authorList>
    </citation>
    <scope>SEQUENCE REVISION</scope>
</reference>
<reference key="3">
    <citation type="journal article" date="1995" name="Mol. Plant Microbe Interact.">
        <title>The complete hrp gene cluster of Pseudomonas syringae pv. syringae 61 includes two blocks of genes required for harpinPss secretion that are arranged colinearly with Yersinia ysc homologs.</title>
        <authorList>
            <person name="Huang H.-C."/>
            <person name="Lin R.-H."/>
            <person name="Chang C.-J."/>
            <person name="Collmer A."/>
            <person name="Deng W.-L."/>
        </authorList>
    </citation>
    <scope>NUCLEOTIDE SEQUENCE [GENOMIC DNA]</scope>
    <source>
        <strain>Pss61</strain>
    </source>
</reference>
<comment type="function">
    <text evidence="2 4">Component of the type III secretion system (T3SS), also called injectisome, which is used to inject bacterial effector proteins into eukaryotic host cells. Forms a ring-shaped multimeric structure with an apparent central pore in the outer membrane (By similarity). Involved in the secretion of a proteinaceous elicitor of the hypersensitivity response in plants (PubMed:1400238).</text>
</comment>
<comment type="subunit">
    <text evidence="2">The core secretion machinery of the T3SS is composed of approximately 20 different proteins, including cytoplasmic components, a base, an export apparatus and a needle. This subunit is part of the base, which anchors the injectisome in the bacterial cell envelope. Forms a stable homooligomeric complex.</text>
</comment>
<comment type="subcellular location">
    <subcellularLocation>
        <location evidence="2 7">Cell outer membrane</location>
    </subcellularLocation>
</comment>
<comment type="similarity">
    <text evidence="2 6">Belongs to the bacterial secretin family. T3SS SctC subfamily.</text>
</comment>
<proteinExistence type="inferred from homology"/>
<accession>Q01723</accession>